<organism>
    <name type="scientific">Lactobacillus johnsonii (strain CNCM I-12250 / La1 / NCC 533)</name>
    <dbReference type="NCBI Taxonomy" id="257314"/>
    <lineage>
        <taxon>Bacteria</taxon>
        <taxon>Bacillati</taxon>
        <taxon>Bacillota</taxon>
        <taxon>Bacilli</taxon>
        <taxon>Lactobacillales</taxon>
        <taxon>Lactobacillaceae</taxon>
        <taxon>Lactobacillus</taxon>
    </lineage>
</organism>
<accession>Q74JL8</accession>
<dbReference type="EC" id="2.7.4.25" evidence="1"/>
<dbReference type="EMBL" id="AE017198">
    <property type="protein sequence ID" value="AAS08911.1"/>
    <property type="molecule type" value="Genomic_DNA"/>
</dbReference>
<dbReference type="SMR" id="Q74JL8"/>
<dbReference type="KEGG" id="ljo:LJ_1089"/>
<dbReference type="eggNOG" id="COG0283">
    <property type="taxonomic scope" value="Bacteria"/>
</dbReference>
<dbReference type="HOGENOM" id="CLU_079959_0_2_9"/>
<dbReference type="Proteomes" id="UP000000581">
    <property type="component" value="Chromosome"/>
</dbReference>
<dbReference type="GO" id="GO:0005829">
    <property type="term" value="C:cytosol"/>
    <property type="evidence" value="ECO:0007669"/>
    <property type="project" value="TreeGrafter"/>
</dbReference>
<dbReference type="GO" id="GO:0005524">
    <property type="term" value="F:ATP binding"/>
    <property type="evidence" value="ECO:0007669"/>
    <property type="project" value="UniProtKB-UniRule"/>
</dbReference>
<dbReference type="GO" id="GO:0036430">
    <property type="term" value="F:CMP kinase activity"/>
    <property type="evidence" value="ECO:0007669"/>
    <property type="project" value="RHEA"/>
</dbReference>
<dbReference type="GO" id="GO:0036431">
    <property type="term" value="F:dCMP kinase activity"/>
    <property type="evidence" value="ECO:0007669"/>
    <property type="project" value="RHEA"/>
</dbReference>
<dbReference type="GO" id="GO:0015949">
    <property type="term" value="P:nucleobase-containing small molecule interconversion"/>
    <property type="evidence" value="ECO:0007669"/>
    <property type="project" value="TreeGrafter"/>
</dbReference>
<dbReference type="GO" id="GO:0006220">
    <property type="term" value="P:pyrimidine nucleotide metabolic process"/>
    <property type="evidence" value="ECO:0007669"/>
    <property type="project" value="UniProtKB-UniRule"/>
</dbReference>
<dbReference type="CDD" id="cd02020">
    <property type="entry name" value="CMPK"/>
    <property type="match status" value="1"/>
</dbReference>
<dbReference type="Gene3D" id="3.40.50.300">
    <property type="entry name" value="P-loop containing nucleotide triphosphate hydrolases"/>
    <property type="match status" value="1"/>
</dbReference>
<dbReference type="HAMAP" id="MF_00238">
    <property type="entry name" value="Cytidyl_kinase_type1"/>
    <property type="match status" value="1"/>
</dbReference>
<dbReference type="InterPro" id="IPR003136">
    <property type="entry name" value="Cytidylate_kin"/>
</dbReference>
<dbReference type="InterPro" id="IPR011994">
    <property type="entry name" value="Cytidylate_kinase_dom"/>
</dbReference>
<dbReference type="InterPro" id="IPR027417">
    <property type="entry name" value="P-loop_NTPase"/>
</dbReference>
<dbReference type="NCBIfam" id="TIGR00017">
    <property type="entry name" value="cmk"/>
    <property type="match status" value="1"/>
</dbReference>
<dbReference type="PANTHER" id="PTHR21299:SF2">
    <property type="entry name" value="CYTIDYLATE KINASE"/>
    <property type="match status" value="1"/>
</dbReference>
<dbReference type="PANTHER" id="PTHR21299">
    <property type="entry name" value="CYTIDYLATE KINASE/PANTOATE-BETA-ALANINE LIGASE"/>
    <property type="match status" value="1"/>
</dbReference>
<dbReference type="Pfam" id="PF02224">
    <property type="entry name" value="Cytidylate_kin"/>
    <property type="match status" value="1"/>
</dbReference>
<dbReference type="SUPFAM" id="SSF52540">
    <property type="entry name" value="P-loop containing nucleoside triphosphate hydrolases"/>
    <property type="match status" value="1"/>
</dbReference>
<name>KCY_LACJO</name>
<reference key="1">
    <citation type="journal article" date="2004" name="Proc. Natl. Acad. Sci. U.S.A.">
        <title>The genome sequence of the probiotic intestinal bacterium Lactobacillus johnsonii NCC 533.</title>
        <authorList>
            <person name="Pridmore R.D."/>
            <person name="Berger B."/>
            <person name="Desiere F."/>
            <person name="Vilanova D."/>
            <person name="Barretto C."/>
            <person name="Pittet A.-C."/>
            <person name="Zwahlen M.-C."/>
            <person name="Rouvet M."/>
            <person name="Altermann E."/>
            <person name="Barrangou R."/>
            <person name="Mollet B."/>
            <person name="Mercenier A."/>
            <person name="Klaenhammer T."/>
            <person name="Arigoni F."/>
            <person name="Schell M.A."/>
        </authorList>
    </citation>
    <scope>NUCLEOTIDE SEQUENCE [LARGE SCALE GENOMIC DNA]</scope>
    <source>
        <strain>CNCM I-1225 / La1 / NCC 533</strain>
    </source>
</reference>
<sequence length="230" mass="25894">MKKKGLNYLMQVAIDGPASAGKSTVAKIIAHNLGYIYIDTGAMYRACTLIAHDNNVDYGDEKAILNLIDHSTIDFKQEDGEQKVYVNGKDVSIDIRTPEITENVSQVSALRSIREKMVELQREMAGKHDVIMDGRDIGTTVLPDAEVKIFLIASVASRAKRRFLDFQEKGIHQDLKDIEHDIEVRDYKDSHREISPLKKADDAIELDTTNLTIDEVVAKITEIIQKKQKN</sequence>
<gene>
    <name evidence="1" type="primary">cmk</name>
    <name type="ordered locus">LJ_1089</name>
</gene>
<comment type="catalytic activity">
    <reaction evidence="1">
        <text>CMP + ATP = CDP + ADP</text>
        <dbReference type="Rhea" id="RHEA:11600"/>
        <dbReference type="ChEBI" id="CHEBI:30616"/>
        <dbReference type="ChEBI" id="CHEBI:58069"/>
        <dbReference type="ChEBI" id="CHEBI:60377"/>
        <dbReference type="ChEBI" id="CHEBI:456216"/>
        <dbReference type="EC" id="2.7.4.25"/>
    </reaction>
</comment>
<comment type="catalytic activity">
    <reaction evidence="1">
        <text>dCMP + ATP = dCDP + ADP</text>
        <dbReference type="Rhea" id="RHEA:25094"/>
        <dbReference type="ChEBI" id="CHEBI:30616"/>
        <dbReference type="ChEBI" id="CHEBI:57566"/>
        <dbReference type="ChEBI" id="CHEBI:58593"/>
        <dbReference type="ChEBI" id="CHEBI:456216"/>
        <dbReference type="EC" id="2.7.4.25"/>
    </reaction>
</comment>
<comment type="subcellular location">
    <subcellularLocation>
        <location evidence="1">Cytoplasm</location>
    </subcellularLocation>
</comment>
<comment type="similarity">
    <text evidence="1">Belongs to the cytidylate kinase family. Type 1 subfamily.</text>
</comment>
<feature type="chain" id="PRO_0000131923" description="Cytidylate kinase">
    <location>
        <begin position="1"/>
        <end position="230"/>
    </location>
</feature>
<feature type="binding site" evidence="1">
    <location>
        <begin position="16"/>
        <end position="24"/>
    </location>
    <ligand>
        <name>ATP</name>
        <dbReference type="ChEBI" id="CHEBI:30616"/>
    </ligand>
</feature>
<proteinExistence type="inferred from homology"/>
<keyword id="KW-0067">ATP-binding</keyword>
<keyword id="KW-0963">Cytoplasm</keyword>
<keyword id="KW-0418">Kinase</keyword>
<keyword id="KW-0547">Nucleotide-binding</keyword>
<keyword id="KW-0808">Transferase</keyword>
<protein>
    <recommendedName>
        <fullName evidence="1">Cytidylate kinase</fullName>
        <shortName evidence="1">CK</shortName>
        <ecNumber evidence="1">2.7.4.25</ecNumber>
    </recommendedName>
    <alternativeName>
        <fullName evidence="1">Cytidine monophosphate kinase</fullName>
        <shortName evidence="1">CMP kinase</shortName>
    </alternativeName>
</protein>
<evidence type="ECO:0000255" key="1">
    <source>
        <dbReference type="HAMAP-Rule" id="MF_00238"/>
    </source>
</evidence>